<sequence>MPTINQLVRNGRTDKVWKSKSPALNKGFNSLKKKSTDISAPQKRGVCTRVGTMTPKKPNSALRKYARVRLTNGIEVTAYIPGIGHNLQEHSVVLIRGGRVKDLPGVRYHIVRGALDTAGVDKRMQGRSKYGTKRPKPAKK</sequence>
<feature type="chain" id="PRO_1000194125" description="Small ribosomal subunit protein uS12">
    <location>
        <begin position="1"/>
        <end position="140"/>
    </location>
</feature>
<feature type="modified residue" description="3-methylthioaspartic acid" evidence="1">
    <location>
        <position position="102"/>
    </location>
</feature>
<keyword id="KW-0488">Methylation</keyword>
<keyword id="KW-0687">Ribonucleoprotein</keyword>
<keyword id="KW-0689">Ribosomal protein</keyword>
<keyword id="KW-0694">RNA-binding</keyword>
<keyword id="KW-0699">rRNA-binding</keyword>
<keyword id="KW-0820">tRNA-binding</keyword>
<name>RS12_BACC4</name>
<protein>
    <recommendedName>
        <fullName evidence="2">Small ribosomal subunit protein uS12</fullName>
    </recommendedName>
    <alternativeName>
        <fullName evidence="3">30S ribosomal protein S12</fullName>
    </alternativeName>
</protein>
<dbReference type="EMBL" id="CP001176">
    <property type="protein sequence ID" value="ACK59429.1"/>
    <property type="molecule type" value="Genomic_DNA"/>
</dbReference>
<dbReference type="RefSeq" id="WP_001142341.1">
    <property type="nucleotide sequence ID" value="NZ_VEHB01000017.1"/>
</dbReference>
<dbReference type="SMR" id="B7HJ43"/>
<dbReference type="GeneID" id="92887798"/>
<dbReference type="KEGG" id="bcb:BCB4264_A0126"/>
<dbReference type="HOGENOM" id="CLU_104295_1_2_9"/>
<dbReference type="Proteomes" id="UP000007096">
    <property type="component" value="Chromosome"/>
</dbReference>
<dbReference type="GO" id="GO:0015935">
    <property type="term" value="C:small ribosomal subunit"/>
    <property type="evidence" value="ECO:0007669"/>
    <property type="project" value="InterPro"/>
</dbReference>
<dbReference type="GO" id="GO:0019843">
    <property type="term" value="F:rRNA binding"/>
    <property type="evidence" value="ECO:0007669"/>
    <property type="project" value="UniProtKB-UniRule"/>
</dbReference>
<dbReference type="GO" id="GO:0003735">
    <property type="term" value="F:structural constituent of ribosome"/>
    <property type="evidence" value="ECO:0007669"/>
    <property type="project" value="InterPro"/>
</dbReference>
<dbReference type="GO" id="GO:0000049">
    <property type="term" value="F:tRNA binding"/>
    <property type="evidence" value="ECO:0007669"/>
    <property type="project" value="UniProtKB-UniRule"/>
</dbReference>
<dbReference type="GO" id="GO:0006412">
    <property type="term" value="P:translation"/>
    <property type="evidence" value="ECO:0007669"/>
    <property type="project" value="UniProtKB-UniRule"/>
</dbReference>
<dbReference type="CDD" id="cd03368">
    <property type="entry name" value="Ribosomal_S12"/>
    <property type="match status" value="1"/>
</dbReference>
<dbReference type="FunFam" id="2.40.50.140:FF:000001">
    <property type="entry name" value="30S ribosomal protein S12"/>
    <property type="match status" value="1"/>
</dbReference>
<dbReference type="Gene3D" id="2.40.50.140">
    <property type="entry name" value="Nucleic acid-binding proteins"/>
    <property type="match status" value="1"/>
</dbReference>
<dbReference type="HAMAP" id="MF_00403_B">
    <property type="entry name" value="Ribosomal_uS12_B"/>
    <property type="match status" value="1"/>
</dbReference>
<dbReference type="InterPro" id="IPR012340">
    <property type="entry name" value="NA-bd_OB-fold"/>
</dbReference>
<dbReference type="InterPro" id="IPR006032">
    <property type="entry name" value="Ribosomal_uS12"/>
</dbReference>
<dbReference type="InterPro" id="IPR005679">
    <property type="entry name" value="Ribosomal_uS12_bac"/>
</dbReference>
<dbReference type="NCBIfam" id="TIGR00981">
    <property type="entry name" value="rpsL_bact"/>
    <property type="match status" value="1"/>
</dbReference>
<dbReference type="PANTHER" id="PTHR11652">
    <property type="entry name" value="30S RIBOSOMAL PROTEIN S12 FAMILY MEMBER"/>
    <property type="match status" value="1"/>
</dbReference>
<dbReference type="Pfam" id="PF00164">
    <property type="entry name" value="Ribosom_S12_S23"/>
    <property type="match status" value="1"/>
</dbReference>
<dbReference type="PRINTS" id="PR01034">
    <property type="entry name" value="RIBOSOMALS12"/>
</dbReference>
<dbReference type="SUPFAM" id="SSF50249">
    <property type="entry name" value="Nucleic acid-binding proteins"/>
    <property type="match status" value="1"/>
</dbReference>
<dbReference type="PROSITE" id="PS00055">
    <property type="entry name" value="RIBOSOMAL_S12"/>
    <property type="match status" value="1"/>
</dbReference>
<accession>B7HJ43</accession>
<organism>
    <name type="scientific">Bacillus cereus (strain B4264)</name>
    <dbReference type="NCBI Taxonomy" id="405532"/>
    <lineage>
        <taxon>Bacteria</taxon>
        <taxon>Bacillati</taxon>
        <taxon>Bacillota</taxon>
        <taxon>Bacilli</taxon>
        <taxon>Bacillales</taxon>
        <taxon>Bacillaceae</taxon>
        <taxon>Bacillus</taxon>
        <taxon>Bacillus cereus group</taxon>
    </lineage>
</organism>
<reference key="1">
    <citation type="submission" date="2008-10" db="EMBL/GenBank/DDBJ databases">
        <title>Genome sequence of Bacillus cereus B4264.</title>
        <authorList>
            <person name="Dodson R.J."/>
            <person name="Durkin A.S."/>
            <person name="Rosovitz M.J."/>
            <person name="Rasko D.A."/>
            <person name="Hoffmaster A."/>
            <person name="Ravel J."/>
            <person name="Sutton G."/>
        </authorList>
    </citation>
    <scope>NUCLEOTIDE SEQUENCE [LARGE SCALE GENOMIC DNA]</scope>
    <source>
        <strain>B4264</strain>
    </source>
</reference>
<gene>
    <name evidence="2" type="primary">rpsL</name>
    <name type="ordered locus">BCB4264_A0126</name>
</gene>
<proteinExistence type="inferred from homology"/>
<comment type="function">
    <text evidence="2">With S4 and S5 plays an important role in translational accuracy.</text>
</comment>
<comment type="function">
    <text evidence="2">Interacts with and stabilizes bases of the 16S rRNA that are involved in tRNA selection in the A site and with the mRNA backbone. Located at the interface of the 30S and 50S subunits, it traverses the body of the 30S subunit contacting proteins on the other side and probably holding the rRNA structure together. The combined cluster of proteins S8, S12 and S17 appears to hold together the shoulder and platform of the 30S subunit.</text>
</comment>
<comment type="subunit">
    <text evidence="2">Part of the 30S ribosomal subunit. Contacts proteins S8 and S17. May interact with IF1 in the 30S initiation complex.</text>
</comment>
<comment type="similarity">
    <text evidence="2">Belongs to the universal ribosomal protein uS12 family.</text>
</comment>
<evidence type="ECO:0000250" key="1"/>
<evidence type="ECO:0000255" key="2">
    <source>
        <dbReference type="HAMAP-Rule" id="MF_00403"/>
    </source>
</evidence>
<evidence type="ECO:0000305" key="3"/>